<name>URE3_PROM9</name>
<accession>Q31B51</accession>
<feature type="chain" id="PRO_0000239907" description="Urease subunit gamma">
    <location>
        <begin position="1"/>
        <end position="100"/>
    </location>
</feature>
<reference key="1">
    <citation type="journal article" date="2006" name="Science">
        <title>Genomic islands and the ecology and evolution of Prochlorococcus.</title>
        <authorList>
            <person name="Coleman M.L."/>
            <person name="Sullivan M.B."/>
            <person name="Martiny A.C."/>
            <person name="Steglich C."/>
            <person name="Barry K."/>
            <person name="Delong E.F."/>
            <person name="Chisholm S.W."/>
        </authorList>
    </citation>
    <scope>NUCLEOTIDE SEQUENCE [LARGE SCALE GENOMIC DNA]</scope>
    <source>
        <strain>MIT 9312</strain>
    </source>
</reference>
<proteinExistence type="inferred from homology"/>
<gene>
    <name evidence="1" type="primary">ureA</name>
    <name type="ordered locus">PMT9312_0834</name>
</gene>
<organism>
    <name type="scientific">Prochlorococcus marinus (strain MIT 9312)</name>
    <dbReference type="NCBI Taxonomy" id="74546"/>
    <lineage>
        <taxon>Bacteria</taxon>
        <taxon>Bacillati</taxon>
        <taxon>Cyanobacteriota</taxon>
        <taxon>Cyanophyceae</taxon>
        <taxon>Synechococcales</taxon>
        <taxon>Prochlorococcaceae</taxon>
        <taxon>Prochlorococcus</taxon>
    </lineage>
</organism>
<dbReference type="EC" id="3.5.1.5" evidence="1"/>
<dbReference type="EMBL" id="CP000111">
    <property type="protein sequence ID" value="ABB49894.1"/>
    <property type="molecule type" value="Genomic_DNA"/>
</dbReference>
<dbReference type="RefSeq" id="WP_011376389.1">
    <property type="nucleotide sequence ID" value="NC_007577.1"/>
</dbReference>
<dbReference type="SMR" id="Q31B51"/>
<dbReference type="STRING" id="74546.PMT9312_0834"/>
<dbReference type="KEGG" id="pmi:PMT9312_0834"/>
<dbReference type="eggNOG" id="COG0831">
    <property type="taxonomic scope" value="Bacteria"/>
</dbReference>
<dbReference type="HOGENOM" id="CLU_145825_1_0_3"/>
<dbReference type="OrthoDB" id="9793527at2"/>
<dbReference type="UniPathway" id="UPA00258">
    <property type="reaction ID" value="UER00370"/>
</dbReference>
<dbReference type="Proteomes" id="UP000002715">
    <property type="component" value="Chromosome"/>
</dbReference>
<dbReference type="GO" id="GO:0005737">
    <property type="term" value="C:cytoplasm"/>
    <property type="evidence" value="ECO:0007669"/>
    <property type="project" value="UniProtKB-SubCell"/>
</dbReference>
<dbReference type="GO" id="GO:0016151">
    <property type="term" value="F:nickel cation binding"/>
    <property type="evidence" value="ECO:0007669"/>
    <property type="project" value="InterPro"/>
</dbReference>
<dbReference type="GO" id="GO:0009039">
    <property type="term" value="F:urease activity"/>
    <property type="evidence" value="ECO:0007669"/>
    <property type="project" value="UniProtKB-UniRule"/>
</dbReference>
<dbReference type="GO" id="GO:0043419">
    <property type="term" value="P:urea catabolic process"/>
    <property type="evidence" value="ECO:0007669"/>
    <property type="project" value="UniProtKB-UniRule"/>
</dbReference>
<dbReference type="CDD" id="cd00390">
    <property type="entry name" value="Urease_gamma"/>
    <property type="match status" value="1"/>
</dbReference>
<dbReference type="Gene3D" id="3.30.280.10">
    <property type="entry name" value="Urease, gamma-like subunit"/>
    <property type="match status" value="1"/>
</dbReference>
<dbReference type="HAMAP" id="MF_00739">
    <property type="entry name" value="Urease_gamma"/>
    <property type="match status" value="1"/>
</dbReference>
<dbReference type="InterPro" id="IPR012010">
    <property type="entry name" value="Urease_gamma"/>
</dbReference>
<dbReference type="InterPro" id="IPR002026">
    <property type="entry name" value="Urease_gamma/gamma-beta_su"/>
</dbReference>
<dbReference type="InterPro" id="IPR036463">
    <property type="entry name" value="Urease_gamma_sf"/>
</dbReference>
<dbReference type="InterPro" id="IPR050069">
    <property type="entry name" value="Urease_subunit"/>
</dbReference>
<dbReference type="NCBIfam" id="NF009712">
    <property type="entry name" value="PRK13241.1"/>
    <property type="match status" value="1"/>
</dbReference>
<dbReference type="NCBIfam" id="TIGR00193">
    <property type="entry name" value="urease_gam"/>
    <property type="match status" value="1"/>
</dbReference>
<dbReference type="PANTHER" id="PTHR33569">
    <property type="entry name" value="UREASE"/>
    <property type="match status" value="1"/>
</dbReference>
<dbReference type="PANTHER" id="PTHR33569:SF1">
    <property type="entry name" value="UREASE"/>
    <property type="match status" value="1"/>
</dbReference>
<dbReference type="Pfam" id="PF00547">
    <property type="entry name" value="Urease_gamma"/>
    <property type="match status" value="1"/>
</dbReference>
<dbReference type="PIRSF" id="PIRSF001223">
    <property type="entry name" value="Urease_gamma"/>
    <property type="match status" value="1"/>
</dbReference>
<dbReference type="SUPFAM" id="SSF54111">
    <property type="entry name" value="Urease, gamma-subunit"/>
    <property type="match status" value="1"/>
</dbReference>
<evidence type="ECO:0000255" key="1">
    <source>
        <dbReference type="HAMAP-Rule" id="MF_00739"/>
    </source>
</evidence>
<protein>
    <recommendedName>
        <fullName evidence="1">Urease subunit gamma</fullName>
        <ecNumber evidence="1">3.5.1.5</ecNumber>
    </recommendedName>
    <alternativeName>
        <fullName evidence="1">Urea amidohydrolase subunit gamma</fullName>
    </alternativeName>
</protein>
<comment type="catalytic activity">
    <reaction evidence="1">
        <text>urea + 2 H2O + H(+) = hydrogencarbonate + 2 NH4(+)</text>
        <dbReference type="Rhea" id="RHEA:20557"/>
        <dbReference type="ChEBI" id="CHEBI:15377"/>
        <dbReference type="ChEBI" id="CHEBI:15378"/>
        <dbReference type="ChEBI" id="CHEBI:16199"/>
        <dbReference type="ChEBI" id="CHEBI:17544"/>
        <dbReference type="ChEBI" id="CHEBI:28938"/>
        <dbReference type="EC" id="3.5.1.5"/>
    </reaction>
</comment>
<comment type="pathway">
    <text evidence="1">Nitrogen metabolism; urea degradation; CO(2) and NH(3) from urea (urease route): step 1/1.</text>
</comment>
<comment type="subunit">
    <text evidence="1">Heterotrimer of UreA (gamma), UreB (beta) and UreC (alpha) subunits. Three heterotrimers associate to form the active enzyme.</text>
</comment>
<comment type="subcellular location">
    <subcellularLocation>
        <location evidence="1">Cytoplasm</location>
    </subcellularLocation>
</comment>
<comment type="similarity">
    <text evidence="1">Belongs to the urease gamma subunit family.</text>
</comment>
<sequence>MHLSPQEKDKLLIFSAALLAERRLNRGLKLNYPESIAFLSFQVLEGARDGKSVSQLMSEGTTWLSKSQVMEGIPEMVHEVQIEAVFPDGTKLVTIHNPIN</sequence>
<keyword id="KW-0963">Cytoplasm</keyword>
<keyword id="KW-0378">Hydrolase</keyword>